<evidence type="ECO:0000255" key="1">
    <source>
        <dbReference type="HAMAP-Rule" id="MF_00023"/>
    </source>
</evidence>
<accession>B6JNU2</accession>
<organism>
    <name type="scientific">Helicobacter pylori (strain P12)</name>
    <dbReference type="NCBI Taxonomy" id="570508"/>
    <lineage>
        <taxon>Bacteria</taxon>
        <taxon>Pseudomonadati</taxon>
        <taxon>Campylobacterota</taxon>
        <taxon>Epsilonproteobacteria</taxon>
        <taxon>Campylobacterales</taxon>
        <taxon>Helicobacteraceae</taxon>
        <taxon>Helicobacter</taxon>
    </lineage>
</organism>
<reference key="1">
    <citation type="submission" date="2008-10" db="EMBL/GenBank/DDBJ databases">
        <title>The complete genome sequence of Helicobacter pylori strain P12.</title>
        <authorList>
            <person name="Fischer W."/>
            <person name="Windhager L."/>
            <person name="Karnholz A."/>
            <person name="Zeiller M."/>
            <person name="Zimmer R."/>
            <person name="Haas R."/>
        </authorList>
    </citation>
    <scope>NUCLEOTIDE SEQUENCE [LARGE SCALE GENOMIC DNA]</scope>
    <source>
        <strain>P12</strain>
    </source>
</reference>
<name>SSRP_HELP2</name>
<feature type="chain" id="PRO_1000090154" description="SsrA-binding protein">
    <location>
        <begin position="1"/>
        <end position="152"/>
    </location>
</feature>
<sequence length="152" mass="17824">MKLIASNKKAYFDYEILETLEAGLALLGSEVKALRQTRVNLKDNFVKIIKGEAFLFGVHISYLDTIHAYYKPNERRERKLLLHKKQLLKWQIEASKERLSIVGLKLYFNQRNRAKIQIALVKGKRLHDKRQSLKEKALNKEILADLKHHFKG</sequence>
<keyword id="KW-0963">Cytoplasm</keyword>
<keyword id="KW-0694">RNA-binding</keyword>
<comment type="function">
    <text evidence="1">Required for rescue of stalled ribosomes mediated by trans-translation. Binds to transfer-messenger RNA (tmRNA), required for stable association of tmRNA with ribosomes. tmRNA and SmpB together mimic tRNA shape, replacing the anticodon stem-loop with SmpB. tmRNA is encoded by the ssrA gene; the 2 termini fold to resemble tRNA(Ala) and it encodes a 'tag peptide', a short internal open reading frame. During trans-translation Ala-aminoacylated tmRNA acts like a tRNA, entering the A-site of stalled ribosomes, displacing the stalled mRNA. The ribosome then switches to translate the ORF on the tmRNA; the nascent peptide is terminated with the 'tag peptide' encoded by the tmRNA and targeted for degradation. The ribosome is freed to recommence translation, which seems to be the essential function of trans-translation.</text>
</comment>
<comment type="subcellular location">
    <subcellularLocation>
        <location evidence="1">Cytoplasm</location>
    </subcellularLocation>
    <text evidence="1">The tmRNA-SmpB complex associates with stalled 70S ribosomes.</text>
</comment>
<comment type="similarity">
    <text evidence="1">Belongs to the SmpB family.</text>
</comment>
<proteinExistence type="inferred from homology"/>
<dbReference type="EMBL" id="CP001217">
    <property type="protein sequence ID" value="ACJ08570.1"/>
    <property type="molecule type" value="Genomic_DNA"/>
</dbReference>
<dbReference type="SMR" id="B6JNU2"/>
<dbReference type="KEGG" id="hpp:HPP12_1422"/>
<dbReference type="HOGENOM" id="CLU_108953_3_1_7"/>
<dbReference type="Proteomes" id="UP000008198">
    <property type="component" value="Chromosome"/>
</dbReference>
<dbReference type="GO" id="GO:0005829">
    <property type="term" value="C:cytosol"/>
    <property type="evidence" value="ECO:0007669"/>
    <property type="project" value="TreeGrafter"/>
</dbReference>
<dbReference type="GO" id="GO:0003723">
    <property type="term" value="F:RNA binding"/>
    <property type="evidence" value="ECO:0007669"/>
    <property type="project" value="UniProtKB-UniRule"/>
</dbReference>
<dbReference type="GO" id="GO:0070929">
    <property type="term" value="P:trans-translation"/>
    <property type="evidence" value="ECO:0007669"/>
    <property type="project" value="UniProtKB-UniRule"/>
</dbReference>
<dbReference type="CDD" id="cd09294">
    <property type="entry name" value="SmpB"/>
    <property type="match status" value="1"/>
</dbReference>
<dbReference type="Gene3D" id="2.40.280.10">
    <property type="match status" value="1"/>
</dbReference>
<dbReference type="HAMAP" id="MF_00023">
    <property type="entry name" value="SmpB"/>
    <property type="match status" value="1"/>
</dbReference>
<dbReference type="InterPro" id="IPR023620">
    <property type="entry name" value="SmpB"/>
</dbReference>
<dbReference type="InterPro" id="IPR000037">
    <property type="entry name" value="SsrA-bd_prot"/>
</dbReference>
<dbReference type="InterPro" id="IPR020081">
    <property type="entry name" value="SsrA-bd_prot_CS"/>
</dbReference>
<dbReference type="NCBIfam" id="NF003843">
    <property type="entry name" value="PRK05422.1"/>
    <property type="match status" value="1"/>
</dbReference>
<dbReference type="NCBIfam" id="TIGR00086">
    <property type="entry name" value="smpB"/>
    <property type="match status" value="1"/>
</dbReference>
<dbReference type="PANTHER" id="PTHR30308:SF2">
    <property type="entry name" value="SSRA-BINDING PROTEIN"/>
    <property type="match status" value="1"/>
</dbReference>
<dbReference type="PANTHER" id="PTHR30308">
    <property type="entry name" value="TMRNA-BINDING COMPONENT OF TRANS-TRANSLATION TAGGING COMPLEX"/>
    <property type="match status" value="1"/>
</dbReference>
<dbReference type="Pfam" id="PF01668">
    <property type="entry name" value="SmpB"/>
    <property type="match status" value="1"/>
</dbReference>
<dbReference type="SUPFAM" id="SSF74982">
    <property type="entry name" value="Small protein B (SmpB)"/>
    <property type="match status" value="1"/>
</dbReference>
<dbReference type="PROSITE" id="PS01317">
    <property type="entry name" value="SSRP"/>
    <property type="match status" value="1"/>
</dbReference>
<protein>
    <recommendedName>
        <fullName evidence="1">SsrA-binding protein</fullName>
    </recommendedName>
    <alternativeName>
        <fullName evidence="1">Small protein B</fullName>
    </alternativeName>
</protein>
<gene>
    <name evidence="1" type="primary">smpB</name>
    <name type="ordered locus">HPP12_1422</name>
</gene>